<dbReference type="EMBL" id="CP001079">
    <property type="protein sequence ID" value="ACM49528.1"/>
    <property type="molecule type" value="Genomic_DNA"/>
</dbReference>
<dbReference type="RefSeq" id="WP_010265298.1">
    <property type="nucleotide sequence ID" value="NZ_AFMS01000137.1"/>
</dbReference>
<dbReference type="SMR" id="B9KJ66"/>
<dbReference type="STRING" id="320483.AMF_692"/>
<dbReference type="GeneID" id="7397874"/>
<dbReference type="KEGG" id="amf:AMF_692"/>
<dbReference type="eggNOG" id="COG0185">
    <property type="taxonomic scope" value="Bacteria"/>
</dbReference>
<dbReference type="HOGENOM" id="CLU_144911_0_1_5"/>
<dbReference type="Proteomes" id="UP000007307">
    <property type="component" value="Chromosome"/>
</dbReference>
<dbReference type="GO" id="GO:0005737">
    <property type="term" value="C:cytoplasm"/>
    <property type="evidence" value="ECO:0007669"/>
    <property type="project" value="UniProtKB-ARBA"/>
</dbReference>
<dbReference type="GO" id="GO:0015935">
    <property type="term" value="C:small ribosomal subunit"/>
    <property type="evidence" value="ECO:0007669"/>
    <property type="project" value="InterPro"/>
</dbReference>
<dbReference type="GO" id="GO:0019843">
    <property type="term" value="F:rRNA binding"/>
    <property type="evidence" value="ECO:0007669"/>
    <property type="project" value="UniProtKB-UniRule"/>
</dbReference>
<dbReference type="GO" id="GO:0003735">
    <property type="term" value="F:structural constituent of ribosome"/>
    <property type="evidence" value="ECO:0007669"/>
    <property type="project" value="InterPro"/>
</dbReference>
<dbReference type="GO" id="GO:0000028">
    <property type="term" value="P:ribosomal small subunit assembly"/>
    <property type="evidence" value="ECO:0007669"/>
    <property type="project" value="TreeGrafter"/>
</dbReference>
<dbReference type="GO" id="GO:0006412">
    <property type="term" value="P:translation"/>
    <property type="evidence" value="ECO:0007669"/>
    <property type="project" value="UniProtKB-UniRule"/>
</dbReference>
<dbReference type="FunFam" id="3.30.860.10:FF:000001">
    <property type="entry name" value="30S ribosomal protein S19"/>
    <property type="match status" value="1"/>
</dbReference>
<dbReference type="Gene3D" id="3.30.860.10">
    <property type="entry name" value="30s Ribosomal Protein S19, Chain A"/>
    <property type="match status" value="1"/>
</dbReference>
<dbReference type="HAMAP" id="MF_00531">
    <property type="entry name" value="Ribosomal_uS19"/>
    <property type="match status" value="1"/>
</dbReference>
<dbReference type="InterPro" id="IPR002222">
    <property type="entry name" value="Ribosomal_uS19"/>
</dbReference>
<dbReference type="InterPro" id="IPR005732">
    <property type="entry name" value="Ribosomal_uS19_bac-type"/>
</dbReference>
<dbReference type="InterPro" id="IPR020934">
    <property type="entry name" value="Ribosomal_uS19_CS"/>
</dbReference>
<dbReference type="InterPro" id="IPR023575">
    <property type="entry name" value="Ribosomal_uS19_SF"/>
</dbReference>
<dbReference type="NCBIfam" id="TIGR01050">
    <property type="entry name" value="rpsS_bact"/>
    <property type="match status" value="1"/>
</dbReference>
<dbReference type="PANTHER" id="PTHR11880">
    <property type="entry name" value="RIBOSOMAL PROTEIN S19P FAMILY MEMBER"/>
    <property type="match status" value="1"/>
</dbReference>
<dbReference type="PANTHER" id="PTHR11880:SF8">
    <property type="entry name" value="SMALL RIBOSOMAL SUBUNIT PROTEIN US19M"/>
    <property type="match status" value="1"/>
</dbReference>
<dbReference type="Pfam" id="PF00203">
    <property type="entry name" value="Ribosomal_S19"/>
    <property type="match status" value="1"/>
</dbReference>
<dbReference type="PIRSF" id="PIRSF002144">
    <property type="entry name" value="Ribosomal_S19"/>
    <property type="match status" value="1"/>
</dbReference>
<dbReference type="PRINTS" id="PR00975">
    <property type="entry name" value="RIBOSOMALS19"/>
</dbReference>
<dbReference type="SUPFAM" id="SSF54570">
    <property type="entry name" value="Ribosomal protein S19"/>
    <property type="match status" value="1"/>
</dbReference>
<dbReference type="PROSITE" id="PS00323">
    <property type="entry name" value="RIBOSOMAL_S19"/>
    <property type="match status" value="1"/>
</dbReference>
<organism>
    <name type="scientific">Anaplasma marginale (strain Florida)</name>
    <dbReference type="NCBI Taxonomy" id="320483"/>
    <lineage>
        <taxon>Bacteria</taxon>
        <taxon>Pseudomonadati</taxon>
        <taxon>Pseudomonadota</taxon>
        <taxon>Alphaproteobacteria</taxon>
        <taxon>Rickettsiales</taxon>
        <taxon>Anaplasmataceae</taxon>
        <taxon>Anaplasma</taxon>
    </lineage>
</organism>
<feature type="chain" id="PRO_1000146361" description="Small ribosomal subunit protein uS19">
    <location>
        <begin position="1"/>
        <end position="93"/>
    </location>
</feature>
<sequence>MSRSIKKPPFCAPHVLRLANRAIASNRNAIINIHSRSSVILHKFIGLTFGVHNGRTYVPVKVTDNIVGRKFGEFSPTRRFLGHAGDKKVSRKG</sequence>
<comment type="function">
    <text evidence="1">Protein S19 forms a complex with S13 that binds strongly to the 16S ribosomal RNA.</text>
</comment>
<comment type="similarity">
    <text evidence="1">Belongs to the universal ribosomal protein uS19 family.</text>
</comment>
<protein>
    <recommendedName>
        <fullName evidence="1">Small ribosomal subunit protein uS19</fullName>
    </recommendedName>
    <alternativeName>
        <fullName evidence="2">30S ribosomal protein S19</fullName>
    </alternativeName>
</protein>
<reference key="1">
    <citation type="journal article" date="2009" name="BMC Genomics">
        <title>Conservation in the face of diversity: multistrain analysis of an intracellular bacterium.</title>
        <authorList>
            <person name="Dark M.J."/>
            <person name="Herndon D.R."/>
            <person name="Kappmeyer L.S."/>
            <person name="Gonzales M.P."/>
            <person name="Nordeen E."/>
            <person name="Palmer G.H."/>
            <person name="Knowles D.P. Jr."/>
            <person name="Brayton K.A."/>
        </authorList>
    </citation>
    <scope>NUCLEOTIDE SEQUENCE [LARGE SCALE GENOMIC DNA]</scope>
    <source>
        <strain>Florida</strain>
    </source>
</reference>
<keyword id="KW-1185">Reference proteome</keyword>
<keyword id="KW-0687">Ribonucleoprotein</keyword>
<keyword id="KW-0689">Ribosomal protein</keyword>
<keyword id="KW-0694">RNA-binding</keyword>
<keyword id="KW-0699">rRNA-binding</keyword>
<accession>B9KJ66</accession>
<name>RS19_ANAMF</name>
<proteinExistence type="inferred from homology"/>
<evidence type="ECO:0000255" key="1">
    <source>
        <dbReference type="HAMAP-Rule" id="MF_00531"/>
    </source>
</evidence>
<evidence type="ECO:0000305" key="2"/>
<gene>
    <name evidence="1" type="primary">rpsS</name>
    <name type="ordered locus">AMF_692</name>
</gene>